<gene>
    <name evidence="1" type="primary">deoC</name>
    <name type="ordered locus">ECIAI1_4604</name>
</gene>
<keyword id="KW-0963">Cytoplasm</keyword>
<keyword id="KW-0456">Lyase</keyword>
<keyword id="KW-0704">Schiff base</keyword>
<sequence>MTDLKASSLRALKLMDLTTLNDDDTDEKVIALCHQAKTPVGNTAAICIYPRFIPIARKTLKEQGTPEIRIATVTNFPHGNDDIEIALAETRAAIAYGADEVDVVFPYRALMAGNEQVGFDLVKACKEACAAANVMLKVIIETGELKDEALIRKASEISIKAGADFIKTSTGKVAVNATPESARIMMEVIRDMGVEKTVGFKPAGGVRTAEDAQKYLAIADELFGADWADARHYRFGASSLLASLLKALGHGDGKSASSY</sequence>
<protein>
    <recommendedName>
        <fullName evidence="1">Deoxyribose-phosphate aldolase</fullName>
        <shortName evidence="1">DERA</shortName>
        <ecNumber evidence="1">4.1.2.4</ecNumber>
    </recommendedName>
    <alternativeName>
        <fullName evidence="1">2-deoxy-D-ribose 5-phosphate aldolase</fullName>
    </alternativeName>
    <alternativeName>
        <fullName evidence="1">Phosphodeoxyriboaldolase</fullName>
        <shortName evidence="1">Deoxyriboaldolase</shortName>
    </alternativeName>
</protein>
<dbReference type="EC" id="4.1.2.4" evidence="1"/>
<dbReference type="EMBL" id="CU928160">
    <property type="protein sequence ID" value="CAR01344.1"/>
    <property type="molecule type" value="Genomic_DNA"/>
</dbReference>
<dbReference type="RefSeq" id="WP_015953267.1">
    <property type="nucleotide sequence ID" value="NC_011741.1"/>
</dbReference>
<dbReference type="SMR" id="B7LXU3"/>
<dbReference type="KEGG" id="ecr:ECIAI1_4604"/>
<dbReference type="HOGENOM" id="CLU_053595_3_1_6"/>
<dbReference type="UniPathway" id="UPA00002">
    <property type="reaction ID" value="UER00468"/>
</dbReference>
<dbReference type="GO" id="GO:0005737">
    <property type="term" value="C:cytoplasm"/>
    <property type="evidence" value="ECO:0007669"/>
    <property type="project" value="UniProtKB-SubCell"/>
</dbReference>
<dbReference type="GO" id="GO:0004139">
    <property type="term" value="F:deoxyribose-phosphate aldolase activity"/>
    <property type="evidence" value="ECO:0007669"/>
    <property type="project" value="UniProtKB-UniRule"/>
</dbReference>
<dbReference type="GO" id="GO:0006018">
    <property type="term" value="P:2-deoxyribose 1-phosphate catabolic process"/>
    <property type="evidence" value="ECO:0007669"/>
    <property type="project" value="UniProtKB-UniRule"/>
</dbReference>
<dbReference type="GO" id="GO:0016052">
    <property type="term" value="P:carbohydrate catabolic process"/>
    <property type="evidence" value="ECO:0007669"/>
    <property type="project" value="TreeGrafter"/>
</dbReference>
<dbReference type="GO" id="GO:0009264">
    <property type="term" value="P:deoxyribonucleotide catabolic process"/>
    <property type="evidence" value="ECO:0007669"/>
    <property type="project" value="InterPro"/>
</dbReference>
<dbReference type="CDD" id="cd00959">
    <property type="entry name" value="DeoC"/>
    <property type="match status" value="1"/>
</dbReference>
<dbReference type="FunFam" id="3.20.20.70:FF:000034">
    <property type="entry name" value="Deoxyribose-phosphate aldolase"/>
    <property type="match status" value="1"/>
</dbReference>
<dbReference type="Gene3D" id="3.20.20.70">
    <property type="entry name" value="Aldolase class I"/>
    <property type="match status" value="1"/>
</dbReference>
<dbReference type="HAMAP" id="MF_00592">
    <property type="entry name" value="DeoC_type2"/>
    <property type="match status" value="1"/>
</dbReference>
<dbReference type="InterPro" id="IPR013785">
    <property type="entry name" value="Aldolase_TIM"/>
</dbReference>
<dbReference type="InterPro" id="IPR011343">
    <property type="entry name" value="DeoC"/>
</dbReference>
<dbReference type="InterPro" id="IPR002915">
    <property type="entry name" value="DeoC/FbaB/LacD_aldolase"/>
</dbReference>
<dbReference type="InterPro" id="IPR023649">
    <property type="entry name" value="DeoC_typeII"/>
</dbReference>
<dbReference type="NCBIfam" id="TIGR00126">
    <property type="entry name" value="deoC"/>
    <property type="match status" value="1"/>
</dbReference>
<dbReference type="PANTHER" id="PTHR10889">
    <property type="entry name" value="DEOXYRIBOSE-PHOSPHATE ALDOLASE"/>
    <property type="match status" value="1"/>
</dbReference>
<dbReference type="PANTHER" id="PTHR10889:SF3">
    <property type="entry name" value="DEOXYRIBOSE-PHOSPHATE ALDOLASE"/>
    <property type="match status" value="1"/>
</dbReference>
<dbReference type="Pfam" id="PF01791">
    <property type="entry name" value="DeoC"/>
    <property type="match status" value="1"/>
</dbReference>
<dbReference type="PIRSF" id="PIRSF001357">
    <property type="entry name" value="DeoC"/>
    <property type="match status" value="1"/>
</dbReference>
<dbReference type="SMART" id="SM01133">
    <property type="entry name" value="DeoC"/>
    <property type="match status" value="1"/>
</dbReference>
<dbReference type="SUPFAM" id="SSF51569">
    <property type="entry name" value="Aldolase"/>
    <property type="match status" value="1"/>
</dbReference>
<comment type="function">
    <text evidence="1">Catalyzes a reversible aldol reaction between acetaldehyde and D-glyceraldehyde 3-phosphate to generate 2-deoxy-D-ribose 5-phosphate.</text>
</comment>
<comment type="catalytic activity">
    <reaction evidence="1">
        <text>2-deoxy-D-ribose 5-phosphate = D-glyceraldehyde 3-phosphate + acetaldehyde</text>
        <dbReference type="Rhea" id="RHEA:12821"/>
        <dbReference type="ChEBI" id="CHEBI:15343"/>
        <dbReference type="ChEBI" id="CHEBI:59776"/>
        <dbReference type="ChEBI" id="CHEBI:62877"/>
        <dbReference type="EC" id="4.1.2.4"/>
    </reaction>
</comment>
<comment type="pathway">
    <text evidence="1">Carbohydrate degradation; 2-deoxy-D-ribose 1-phosphate degradation; D-glyceraldehyde 3-phosphate and acetaldehyde from 2-deoxy-alpha-D-ribose 1-phosphate: step 2/2.</text>
</comment>
<comment type="subcellular location">
    <subcellularLocation>
        <location evidence="1">Cytoplasm</location>
    </subcellularLocation>
</comment>
<comment type="similarity">
    <text evidence="1">Belongs to the DeoC/FbaB aldolase family. DeoC type 2 subfamily.</text>
</comment>
<reference key="1">
    <citation type="journal article" date="2009" name="PLoS Genet.">
        <title>Organised genome dynamics in the Escherichia coli species results in highly diverse adaptive paths.</title>
        <authorList>
            <person name="Touchon M."/>
            <person name="Hoede C."/>
            <person name="Tenaillon O."/>
            <person name="Barbe V."/>
            <person name="Baeriswyl S."/>
            <person name="Bidet P."/>
            <person name="Bingen E."/>
            <person name="Bonacorsi S."/>
            <person name="Bouchier C."/>
            <person name="Bouvet O."/>
            <person name="Calteau A."/>
            <person name="Chiapello H."/>
            <person name="Clermont O."/>
            <person name="Cruveiller S."/>
            <person name="Danchin A."/>
            <person name="Diard M."/>
            <person name="Dossat C."/>
            <person name="Karoui M.E."/>
            <person name="Frapy E."/>
            <person name="Garry L."/>
            <person name="Ghigo J.M."/>
            <person name="Gilles A.M."/>
            <person name="Johnson J."/>
            <person name="Le Bouguenec C."/>
            <person name="Lescat M."/>
            <person name="Mangenot S."/>
            <person name="Martinez-Jehanne V."/>
            <person name="Matic I."/>
            <person name="Nassif X."/>
            <person name="Oztas S."/>
            <person name="Petit M.A."/>
            <person name="Pichon C."/>
            <person name="Rouy Z."/>
            <person name="Ruf C.S."/>
            <person name="Schneider D."/>
            <person name="Tourret J."/>
            <person name="Vacherie B."/>
            <person name="Vallenet D."/>
            <person name="Medigue C."/>
            <person name="Rocha E.P.C."/>
            <person name="Denamur E."/>
        </authorList>
    </citation>
    <scope>NUCLEOTIDE SEQUENCE [LARGE SCALE GENOMIC DNA]</scope>
    <source>
        <strain>IAI1</strain>
    </source>
</reference>
<organism>
    <name type="scientific">Escherichia coli O8 (strain IAI1)</name>
    <dbReference type="NCBI Taxonomy" id="585034"/>
    <lineage>
        <taxon>Bacteria</taxon>
        <taxon>Pseudomonadati</taxon>
        <taxon>Pseudomonadota</taxon>
        <taxon>Gammaproteobacteria</taxon>
        <taxon>Enterobacterales</taxon>
        <taxon>Enterobacteriaceae</taxon>
        <taxon>Escherichia</taxon>
    </lineage>
</organism>
<proteinExistence type="inferred from homology"/>
<feature type="chain" id="PRO_1000129802" description="Deoxyribose-phosphate aldolase">
    <location>
        <begin position="1"/>
        <end position="259"/>
    </location>
</feature>
<feature type="active site" description="Proton donor/acceptor" evidence="1">
    <location>
        <position position="102"/>
    </location>
</feature>
<feature type="active site" description="Schiff-base intermediate with acetaldehyde" evidence="1">
    <location>
        <position position="167"/>
    </location>
</feature>
<feature type="active site" description="Proton donor/acceptor" evidence="1">
    <location>
        <position position="201"/>
    </location>
</feature>
<evidence type="ECO:0000255" key="1">
    <source>
        <dbReference type="HAMAP-Rule" id="MF_00592"/>
    </source>
</evidence>
<accession>B7LXU3</accession>
<name>DEOC_ECO8A</name>